<name>Y104_METJA</name>
<reference key="1">
    <citation type="journal article" date="1996" name="Science">
        <title>Complete genome sequence of the methanogenic archaeon, Methanococcus jannaschii.</title>
        <authorList>
            <person name="Bult C.J."/>
            <person name="White O."/>
            <person name="Olsen G.J."/>
            <person name="Zhou L."/>
            <person name="Fleischmann R.D."/>
            <person name="Sutton G.G."/>
            <person name="Blake J.A."/>
            <person name="FitzGerald L.M."/>
            <person name="Clayton R.A."/>
            <person name="Gocayne J.D."/>
            <person name="Kerlavage A.R."/>
            <person name="Dougherty B.A."/>
            <person name="Tomb J.-F."/>
            <person name="Adams M.D."/>
            <person name="Reich C.I."/>
            <person name="Overbeek R."/>
            <person name="Kirkness E.F."/>
            <person name="Weinstock K.G."/>
            <person name="Merrick J.M."/>
            <person name="Glodek A."/>
            <person name="Scott J.L."/>
            <person name="Geoghagen N.S.M."/>
            <person name="Weidman J.F."/>
            <person name="Fuhrmann J.L."/>
            <person name="Nguyen D."/>
            <person name="Utterback T.R."/>
            <person name="Kelley J.M."/>
            <person name="Peterson J.D."/>
            <person name="Sadow P.W."/>
            <person name="Hanna M.C."/>
            <person name="Cotton M.D."/>
            <person name="Roberts K.M."/>
            <person name="Hurst M.A."/>
            <person name="Kaine B.P."/>
            <person name="Borodovsky M."/>
            <person name="Klenk H.-P."/>
            <person name="Fraser C.M."/>
            <person name="Smith H.O."/>
            <person name="Woese C.R."/>
            <person name="Venter J.C."/>
        </authorList>
    </citation>
    <scope>NUCLEOTIDE SEQUENCE [LARGE SCALE GENOMIC DNA]</scope>
    <source>
        <strain>ATCC 43067 / DSM 2661 / JAL-1 / JCM 10045 / NBRC 100440</strain>
    </source>
</reference>
<comment type="similarity">
    <text evidence="2">Belongs to the DNA2/NAM7 helicase family.</text>
</comment>
<accession>Q57568</accession>
<gene>
    <name type="ordered locus">MJ0104</name>
</gene>
<evidence type="ECO:0000250" key="1"/>
<evidence type="ECO:0000305" key="2"/>
<feature type="chain" id="PRO_0000080730" description="Uncharacterized ATP-dependent helicase MJ0104">
    <location>
        <begin position="1"/>
        <end position="663"/>
    </location>
</feature>
<feature type="binding site" evidence="1">
    <location>
        <begin position="207"/>
        <end position="214"/>
    </location>
    <ligand>
        <name>ATP</name>
        <dbReference type="ChEBI" id="CHEBI:30616"/>
    </ligand>
</feature>
<organism>
    <name type="scientific">Methanocaldococcus jannaschii (strain ATCC 43067 / DSM 2661 / JAL-1 / JCM 10045 / NBRC 100440)</name>
    <name type="common">Methanococcus jannaschii</name>
    <dbReference type="NCBI Taxonomy" id="243232"/>
    <lineage>
        <taxon>Archaea</taxon>
        <taxon>Methanobacteriati</taxon>
        <taxon>Methanobacteriota</taxon>
        <taxon>Methanomada group</taxon>
        <taxon>Methanococci</taxon>
        <taxon>Methanococcales</taxon>
        <taxon>Methanocaldococcaceae</taxon>
        <taxon>Methanocaldococcus</taxon>
    </lineage>
</organism>
<keyword id="KW-0067">ATP-binding</keyword>
<keyword id="KW-0347">Helicase</keyword>
<keyword id="KW-0378">Hydrolase</keyword>
<keyword id="KW-0547">Nucleotide-binding</keyword>
<keyword id="KW-1185">Reference proteome</keyword>
<sequence>MQNWFKSGDSLNLVDLYVKKFMDLIEIERRCEMDFHKNEIIKLGKKRENVGRAILNLKGKFLGESLGCTIVRFGRKKPFKTEISPGDVVLVSKENPLQSDLYANVIYVGKNFIDVAFDVDVPKWVYKERVRVDLYVNDITFKRMKEALREFARKRDKLAYIILGIEHPEKPLREDIKLEFYDKNLNESQKLAVKKAVLSRDLYLIHGPPGTGKTRTITEVIVQEVKFNKHKVLATADSNIAADNILEYLIKKYPDLKVVRVGHPTRISKDLIQHSLPYLIENHEKYQEILALREKIKEIKEQRDKFLKPSPRWRRGMSDEQILKVAKRKKSYRGIPKEKIVSMAEWIIRNKKIKRIINNLDEITEKIMNEILAEADVIVATNSMAGSEILKGWEFDVIVIDEGSQAMEPSCLIPIVKGRKLIMAGDHKQLPPTVLSENEELKKTLFERLIKKYPEFSSILEIQYRMNEKIMEFPNKMFYNNKLKADESVKNITLLDLVKEEEIDEVDRDIINEIPVQFINVEGIERKDKESPSYYNIEEAEKVLEIVKKLVKYKIPTNVITPYDAQVRYLRRLFEEHNIDIEVNTVDGFQGRENEAIVISFVRTKNFGFLKDLRRLNVAITRAKRKLILIGNENLLKQDKVYNEMIKWAKSVEEEHKNKIIQK</sequence>
<dbReference type="EC" id="3.6.4.-"/>
<dbReference type="EMBL" id="L77117">
    <property type="protein sequence ID" value="AAB98084.1"/>
    <property type="molecule type" value="Genomic_DNA"/>
</dbReference>
<dbReference type="PIR" id="H64312">
    <property type="entry name" value="H64312"/>
</dbReference>
<dbReference type="SMR" id="Q57568"/>
<dbReference type="FunCoup" id="Q57568">
    <property type="interactions" value="84"/>
</dbReference>
<dbReference type="STRING" id="243232.MJ_0104"/>
<dbReference type="PaxDb" id="243232-MJ_0104"/>
<dbReference type="EnsemblBacteria" id="AAB98084">
    <property type="protein sequence ID" value="AAB98084"/>
    <property type="gene ID" value="MJ_0104"/>
</dbReference>
<dbReference type="KEGG" id="mja:MJ_0104"/>
<dbReference type="eggNOG" id="arCOG00792">
    <property type="taxonomic scope" value="Archaea"/>
</dbReference>
<dbReference type="HOGENOM" id="CLU_001666_8_2_2"/>
<dbReference type="InParanoid" id="Q57568"/>
<dbReference type="PhylomeDB" id="Q57568"/>
<dbReference type="Proteomes" id="UP000000805">
    <property type="component" value="Chromosome"/>
</dbReference>
<dbReference type="GO" id="GO:0043139">
    <property type="term" value="F:5'-3' DNA helicase activity"/>
    <property type="evidence" value="ECO:0000318"/>
    <property type="project" value="GO_Central"/>
</dbReference>
<dbReference type="GO" id="GO:0005524">
    <property type="term" value="F:ATP binding"/>
    <property type="evidence" value="ECO:0007669"/>
    <property type="project" value="UniProtKB-KW"/>
</dbReference>
<dbReference type="GO" id="GO:0003677">
    <property type="term" value="F:DNA binding"/>
    <property type="evidence" value="ECO:0007669"/>
    <property type="project" value="InterPro"/>
</dbReference>
<dbReference type="GO" id="GO:0016787">
    <property type="term" value="F:hydrolase activity"/>
    <property type="evidence" value="ECO:0007669"/>
    <property type="project" value="UniProtKB-KW"/>
</dbReference>
<dbReference type="CDD" id="cd18808">
    <property type="entry name" value="SF1_C_Upf1"/>
    <property type="match status" value="1"/>
</dbReference>
<dbReference type="FunFam" id="2.40.30.270:FF:000007">
    <property type="entry name" value="DNA helicase, putative"/>
    <property type="match status" value="1"/>
</dbReference>
<dbReference type="FunFam" id="3.40.50.300:FF:000326">
    <property type="entry name" value="P-loop containing nucleoside triphosphate hydrolase"/>
    <property type="match status" value="1"/>
</dbReference>
<dbReference type="Gene3D" id="2.40.30.270">
    <property type="match status" value="1"/>
</dbReference>
<dbReference type="Gene3D" id="3.40.50.300">
    <property type="entry name" value="P-loop containing nucleotide triphosphate hydrolases"/>
    <property type="match status" value="2"/>
</dbReference>
<dbReference type="InterPro" id="IPR050534">
    <property type="entry name" value="Coronavir_polyprotein_1ab"/>
</dbReference>
<dbReference type="InterPro" id="IPR041679">
    <property type="entry name" value="DNA2/NAM7-like_C"/>
</dbReference>
<dbReference type="InterPro" id="IPR041677">
    <property type="entry name" value="DNA2/NAM7_AAA_11"/>
</dbReference>
<dbReference type="InterPro" id="IPR014001">
    <property type="entry name" value="Helicase_ATP-bd"/>
</dbReference>
<dbReference type="InterPro" id="IPR027417">
    <property type="entry name" value="P-loop_NTPase"/>
</dbReference>
<dbReference type="InterPro" id="IPR047187">
    <property type="entry name" value="SF1_C_Upf1"/>
</dbReference>
<dbReference type="InterPro" id="IPR004483">
    <property type="entry name" value="SMUBP-2/Hcs1-like"/>
</dbReference>
<dbReference type="NCBIfam" id="TIGR00376">
    <property type="entry name" value="IGHMBP2 family helicase"/>
    <property type="match status" value="1"/>
</dbReference>
<dbReference type="PANTHER" id="PTHR43788:SF8">
    <property type="entry name" value="DNA-BINDING PROTEIN SMUBP-2"/>
    <property type="match status" value="1"/>
</dbReference>
<dbReference type="PANTHER" id="PTHR43788">
    <property type="entry name" value="DNA2/NAM7 HELICASE FAMILY MEMBER"/>
    <property type="match status" value="1"/>
</dbReference>
<dbReference type="Pfam" id="PF13086">
    <property type="entry name" value="AAA_11"/>
    <property type="match status" value="1"/>
</dbReference>
<dbReference type="Pfam" id="PF13087">
    <property type="entry name" value="AAA_12"/>
    <property type="match status" value="1"/>
</dbReference>
<dbReference type="SMART" id="SM00487">
    <property type="entry name" value="DEXDc"/>
    <property type="match status" value="1"/>
</dbReference>
<dbReference type="SUPFAM" id="SSF52540">
    <property type="entry name" value="P-loop containing nucleoside triphosphate hydrolases"/>
    <property type="match status" value="1"/>
</dbReference>
<proteinExistence type="inferred from homology"/>
<protein>
    <recommendedName>
        <fullName>Uncharacterized ATP-dependent helicase MJ0104</fullName>
        <ecNumber>3.6.4.-</ecNumber>
    </recommendedName>
</protein>